<gene>
    <name evidence="1" type="primary">rpsD</name>
    <name type="ordered locus">Acid345_1254</name>
</gene>
<proteinExistence type="inferred from homology"/>
<organism>
    <name type="scientific">Koribacter versatilis (strain Ellin345)</name>
    <dbReference type="NCBI Taxonomy" id="204669"/>
    <lineage>
        <taxon>Bacteria</taxon>
        <taxon>Pseudomonadati</taxon>
        <taxon>Acidobacteriota</taxon>
        <taxon>Terriglobia</taxon>
        <taxon>Terriglobales</taxon>
        <taxon>Candidatus Korobacteraceae</taxon>
        <taxon>Candidatus Korobacter</taxon>
    </lineage>
</organism>
<keyword id="KW-1185">Reference proteome</keyword>
<keyword id="KW-0687">Ribonucleoprotein</keyword>
<keyword id="KW-0689">Ribosomal protein</keyword>
<keyword id="KW-0694">RNA-binding</keyword>
<keyword id="KW-0699">rRNA-binding</keyword>
<dbReference type="EMBL" id="CP000360">
    <property type="protein sequence ID" value="ABF40256.1"/>
    <property type="molecule type" value="Genomic_DNA"/>
</dbReference>
<dbReference type="RefSeq" id="WP_011522058.1">
    <property type="nucleotide sequence ID" value="NC_008009.1"/>
</dbReference>
<dbReference type="SMR" id="Q1IS94"/>
<dbReference type="STRING" id="204669.Acid345_1254"/>
<dbReference type="EnsemblBacteria" id="ABF40256">
    <property type="protein sequence ID" value="ABF40256"/>
    <property type="gene ID" value="Acid345_1254"/>
</dbReference>
<dbReference type="KEGG" id="aba:Acid345_1254"/>
<dbReference type="eggNOG" id="COG0522">
    <property type="taxonomic scope" value="Bacteria"/>
</dbReference>
<dbReference type="HOGENOM" id="CLU_092403_0_2_0"/>
<dbReference type="OrthoDB" id="9803672at2"/>
<dbReference type="Proteomes" id="UP000002432">
    <property type="component" value="Chromosome"/>
</dbReference>
<dbReference type="GO" id="GO:0015935">
    <property type="term" value="C:small ribosomal subunit"/>
    <property type="evidence" value="ECO:0007669"/>
    <property type="project" value="InterPro"/>
</dbReference>
<dbReference type="GO" id="GO:0019843">
    <property type="term" value="F:rRNA binding"/>
    <property type="evidence" value="ECO:0007669"/>
    <property type="project" value="UniProtKB-UniRule"/>
</dbReference>
<dbReference type="GO" id="GO:0003735">
    <property type="term" value="F:structural constituent of ribosome"/>
    <property type="evidence" value="ECO:0007669"/>
    <property type="project" value="InterPro"/>
</dbReference>
<dbReference type="GO" id="GO:0042274">
    <property type="term" value="P:ribosomal small subunit biogenesis"/>
    <property type="evidence" value="ECO:0007669"/>
    <property type="project" value="TreeGrafter"/>
</dbReference>
<dbReference type="GO" id="GO:0006412">
    <property type="term" value="P:translation"/>
    <property type="evidence" value="ECO:0007669"/>
    <property type="project" value="UniProtKB-UniRule"/>
</dbReference>
<dbReference type="CDD" id="cd00165">
    <property type="entry name" value="S4"/>
    <property type="match status" value="1"/>
</dbReference>
<dbReference type="FunFam" id="3.10.290.10:FF:000001">
    <property type="entry name" value="30S ribosomal protein S4"/>
    <property type="match status" value="1"/>
</dbReference>
<dbReference type="Gene3D" id="1.10.1050.10">
    <property type="entry name" value="Ribosomal Protein S4 Delta 41, Chain A, domain 1"/>
    <property type="match status" value="1"/>
</dbReference>
<dbReference type="Gene3D" id="3.10.290.10">
    <property type="entry name" value="RNA-binding S4 domain"/>
    <property type="match status" value="1"/>
</dbReference>
<dbReference type="HAMAP" id="MF_01306_B">
    <property type="entry name" value="Ribosomal_uS4_B"/>
    <property type="match status" value="1"/>
</dbReference>
<dbReference type="InterPro" id="IPR022801">
    <property type="entry name" value="Ribosomal_uS4"/>
</dbReference>
<dbReference type="InterPro" id="IPR005709">
    <property type="entry name" value="Ribosomal_uS4_bac-type"/>
</dbReference>
<dbReference type="InterPro" id="IPR001912">
    <property type="entry name" value="Ribosomal_uS4_N"/>
</dbReference>
<dbReference type="InterPro" id="IPR002942">
    <property type="entry name" value="S4_RNA-bd"/>
</dbReference>
<dbReference type="InterPro" id="IPR036986">
    <property type="entry name" value="S4_RNA-bd_sf"/>
</dbReference>
<dbReference type="NCBIfam" id="NF003717">
    <property type="entry name" value="PRK05327.1"/>
    <property type="match status" value="1"/>
</dbReference>
<dbReference type="NCBIfam" id="TIGR01017">
    <property type="entry name" value="rpsD_bact"/>
    <property type="match status" value="1"/>
</dbReference>
<dbReference type="PANTHER" id="PTHR11831">
    <property type="entry name" value="30S 40S RIBOSOMAL PROTEIN"/>
    <property type="match status" value="1"/>
</dbReference>
<dbReference type="PANTHER" id="PTHR11831:SF4">
    <property type="entry name" value="SMALL RIBOSOMAL SUBUNIT PROTEIN US4M"/>
    <property type="match status" value="1"/>
</dbReference>
<dbReference type="Pfam" id="PF00163">
    <property type="entry name" value="Ribosomal_S4"/>
    <property type="match status" value="1"/>
</dbReference>
<dbReference type="Pfam" id="PF01479">
    <property type="entry name" value="S4"/>
    <property type="match status" value="1"/>
</dbReference>
<dbReference type="SMART" id="SM01390">
    <property type="entry name" value="Ribosomal_S4"/>
    <property type="match status" value="1"/>
</dbReference>
<dbReference type="SMART" id="SM00363">
    <property type="entry name" value="S4"/>
    <property type="match status" value="1"/>
</dbReference>
<dbReference type="SUPFAM" id="SSF55174">
    <property type="entry name" value="Alpha-L RNA-binding motif"/>
    <property type="match status" value="1"/>
</dbReference>
<dbReference type="PROSITE" id="PS50889">
    <property type="entry name" value="S4"/>
    <property type="match status" value="1"/>
</dbReference>
<sequence>MARYKDAVCRLCRREGTKLFLKGPKCFTDKCAIEKRNFAPGQHGKDRKAKIVGYGLQLREKQKTKRMYFAQENQFRNYFEKAAKGQGVTGEMLLQQLERRLDNVVYRLGFASARRQARQLVRHGHIAVNGKKVNIPSYQVSVKDEIAVREGSKEMTLLGQIKELTSHTTVPGWLIVDRDNWKGSVSSLPRRDEIQMPVNEQLIVELYSK</sequence>
<accession>Q1IS94</accession>
<comment type="function">
    <text evidence="1">One of the primary rRNA binding proteins, it binds directly to 16S rRNA where it nucleates assembly of the body of the 30S subunit.</text>
</comment>
<comment type="function">
    <text evidence="1">With S5 and S12 plays an important role in translational accuracy.</text>
</comment>
<comment type="subunit">
    <text evidence="1">Part of the 30S ribosomal subunit. Contacts protein S5. The interaction surface between S4 and S5 is involved in control of translational fidelity.</text>
</comment>
<comment type="similarity">
    <text evidence="1">Belongs to the universal ribosomal protein uS4 family.</text>
</comment>
<protein>
    <recommendedName>
        <fullName evidence="1">Small ribosomal subunit protein uS4</fullName>
    </recommendedName>
    <alternativeName>
        <fullName evidence="2">30S ribosomal protein S4</fullName>
    </alternativeName>
</protein>
<feature type="chain" id="PRO_0000293224" description="Small ribosomal subunit protein uS4">
    <location>
        <begin position="1"/>
        <end position="209"/>
    </location>
</feature>
<feature type="domain" description="S4 RNA-binding" evidence="1">
    <location>
        <begin position="99"/>
        <end position="160"/>
    </location>
</feature>
<reference key="1">
    <citation type="journal article" date="2009" name="Appl. Environ. Microbiol.">
        <title>Three genomes from the phylum Acidobacteria provide insight into the lifestyles of these microorganisms in soils.</title>
        <authorList>
            <person name="Ward N.L."/>
            <person name="Challacombe J.F."/>
            <person name="Janssen P.H."/>
            <person name="Henrissat B."/>
            <person name="Coutinho P.M."/>
            <person name="Wu M."/>
            <person name="Xie G."/>
            <person name="Haft D.H."/>
            <person name="Sait M."/>
            <person name="Badger J."/>
            <person name="Barabote R.D."/>
            <person name="Bradley B."/>
            <person name="Brettin T.S."/>
            <person name="Brinkac L.M."/>
            <person name="Bruce D."/>
            <person name="Creasy T."/>
            <person name="Daugherty S.C."/>
            <person name="Davidsen T.M."/>
            <person name="DeBoy R.T."/>
            <person name="Detter J.C."/>
            <person name="Dodson R.J."/>
            <person name="Durkin A.S."/>
            <person name="Ganapathy A."/>
            <person name="Gwinn-Giglio M."/>
            <person name="Han C.S."/>
            <person name="Khouri H."/>
            <person name="Kiss H."/>
            <person name="Kothari S.P."/>
            <person name="Madupu R."/>
            <person name="Nelson K.E."/>
            <person name="Nelson W.C."/>
            <person name="Paulsen I."/>
            <person name="Penn K."/>
            <person name="Ren Q."/>
            <person name="Rosovitz M.J."/>
            <person name="Selengut J.D."/>
            <person name="Shrivastava S."/>
            <person name="Sullivan S.A."/>
            <person name="Tapia R."/>
            <person name="Thompson L.S."/>
            <person name="Watkins K.L."/>
            <person name="Yang Q."/>
            <person name="Yu C."/>
            <person name="Zafar N."/>
            <person name="Zhou L."/>
            <person name="Kuske C.R."/>
        </authorList>
    </citation>
    <scope>NUCLEOTIDE SEQUENCE [LARGE SCALE GENOMIC DNA]</scope>
    <source>
        <strain>Ellin345</strain>
    </source>
</reference>
<name>RS4_KORVE</name>
<evidence type="ECO:0000255" key="1">
    <source>
        <dbReference type="HAMAP-Rule" id="MF_01306"/>
    </source>
</evidence>
<evidence type="ECO:0000305" key="2"/>